<evidence type="ECO:0000255" key="1">
    <source>
        <dbReference type="HAMAP-Rule" id="MF_00476"/>
    </source>
</evidence>
<sequence>MQRVTITLDDDLLETLDSLSQRRGYNNRSEAIRDILRGALAQEATQEHGTQGFAVLSYVYEHEKRDLASRIVSTQHHHHDLSVATLHVHINHDDCLEIAVLKGDMGDVQHFADDVIAQRGVRHGHLQCLPKED</sequence>
<feature type="chain" id="PRO_1000125838" description="Nickel-responsive regulator">
    <location>
        <begin position="1"/>
        <end position="133"/>
    </location>
</feature>
<feature type="binding site" evidence="1">
    <location>
        <position position="76"/>
    </location>
    <ligand>
        <name>Ni(2+)</name>
        <dbReference type="ChEBI" id="CHEBI:49786"/>
    </ligand>
</feature>
<feature type="binding site" evidence="1">
    <location>
        <position position="87"/>
    </location>
    <ligand>
        <name>Ni(2+)</name>
        <dbReference type="ChEBI" id="CHEBI:49786"/>
    </ligand>
</feature>
<feature type="binding site" evidence="1">
    <location>
        <position position="89"/>
    </location>
    <ligand>
        <name>Ni(2+)</name>
        <dbReference type="ChEBI" id="CHEBI:49786"/>
    </ligand>
</feature>
<feature type="binding site" evidence="1">
    <location>
        <position position="95"/>
    </location>
    <ligand>
        <name>Ni(2+)</name>
        <dbReference type="ChEBI" id="CHEBI:49786"/>
    </ligand>
</feature>
<accession>B5R3Y5</accession>
<comment type="function">
    <text evidence="1">Transcriptional repressor of the nikABCDE operon. Is active in the presence of excessive concentrations of intracellular nickel.</text>
</comment>
<comment type="cofactor">
    <cofactor evidence="1">
        <name>Ni(2+)</name>
        <dbReference type="ChEBI" id="CHEBI:49786"/>
    </cofactor>
    <text evidence="1">Binds 1 nickel ion per subunit.</text>
</comment>
<comment type="subunit">
    <text evidence="1">Homotetramer.</text>
</comment>
<comment type="similarity">
    <text evidence="1">Belongs to the transcriptional regulatory CopG/NikR family.</text>
</comment>
<proteinExistence type="inferred from homology"/>
<organism>
    <name type="scientific">Salmonella enteritidis PT4 (strain P125109)</name>
    <dbReference type="NCBI Taxonomy" id="550537"/>
    <lineage>
        <taxon>Bacteria</taxon>
        <taxon>Pseudomonadati</taxon>
        <taxon>Pseudomonadota</taxon>
        <taxon>Gammaproteobacteria</taxon>
        <taxon>Enterobacterales</taxon>
        <taxon>Enterobacteriaceae</taxon>
        <taxon>Salmonella</taxon>
    </lineage>
</organism>
<protein>
    <recommendedName>
        <fullName evidence="1">Nickel-responsive regulator</fullName>
    </recommendedName>
</protein>
<keyword id="KW-0238">DNA-binding</keyword>
<keyword id="KW-0479">Metal-binding</keyword>
<keyword id="KW-0533">Nickel</keyword>
<keyword id="KW-0678">Repressor</keyword>
<keyword id="KW-0804">Transcription</keyword>
<keyword id="KW-0805">Transcription regulation</keyword>
<reference key="1">
    <citation type="journal article" date="2008" name="Genome Res.">
        <title>Comparative genome analysis of Salmonella enteritidis PT4 and Salmonella gallinarum 287/91 provides insights into evolutionary and host adaptation pathways.</title>
        <authorList>
            <person name="Thomson N.R."/>
            <person name="Clayton D.J."/>
            <person name="Windhorst D."/>
            <person name="Vernikos G."/>
            <person name="Davidson S."/>
            <person name="Churcher C."/>
            <person name="Quail M.A."/>
            <person name="Stevens M."/>
            <person name="Jones M.A."/>
            <person name="Watson M."/>
            <person name="Barron A."/>
            <person name="Layton A."/>
            <person name="Pickard D."/>
            <person name="Kingsley R.A."/>
            <person name="Bignell A."/>
            <person name="Clark L."/>
            <person name="Harris B."/>
            <person name="Ormond D."/>
            <person name="Abdellah Z."/>
            <person name="Brooks K."/>
            <person name="Cherevach I."/>
            <person name="Chillingworth T."/>
            <person name="Woodward J."/>
            <person name="Norberczak H."/>
            <person name="Lord A."/>
            <person name="Arrowsmith C."/>
            <person name="Jagels K."/>
            <person name="Moule S."/>
            <person name="Mungall K."/>
            <person name="Saunders M."/>
            <person name="Whitehead S."/>
            <person name="Chabalgoity J.A."/>
            <person name="Maskell D."/>
            <person name="Humphreys T."/>
            <person name="Roberts M."/>
            <person name="Barrow P.A."/>
            <person name="Dougan G."/>
            <person name="Parkhill J."/>
        </authorList>
    </citation>
    <scope>NUCLEOTIDE SEQUENCE [LARGE SCALE GENOMIC DNA]</scope>
    <source>
        <strain>P125109</strain>
    </source>
</reference>
<name>NIKR_SALEP</name>
<gene>
    <name evidence="1" type="primary">nikR</name>
    <name type="ordered locus">SEN3407</name>
</gene>
<dbReference type="EMBL" id="AM933172">
    <property type="protein sequence ID" value="CAR34983.1"/>
    <property type="molecule type" value="Genomic_DNA"/>
</dbReference>
<dbReference type="RefSeq" id="WP_001190057.1">
    <property type="nucleotide sequence ID" value="NC_011294.1"/>
</dbReference>
<dbReference type="SMR" id="B5R3Y5"/>
<dbReference type="KEGG" id="set:SEN3407"/>
<dbReference type="HOGENOM" id="CLU_113319_1_4_6"/>
<dbReference type="Proteomes" id="UP000000613">
    <property type="component" value="Chromosome"/>
</dbReference>
<dbReference type="GO" id="GO:0003700">
    <property type="term" value="F:DNA-binding transcription factor activity"/>
    <property type="evidence" value="ECO:0007669"/>
    <property type="project" value="UniProtKB-UniRule"/>
</dbReference>
<dbReference type="GO" id="GO:0016151">
    <property type="term" value="F:nickel cation binding"/>
    <property type="evidence" value="ECO:0007669"/>
    <property type="project" value="UniProtKB-UniRule"/>
</dbReference>
<dbReference type="GO" id="GO:0043565">
    <property type="term" value="F:sequence-specific DNA binding"/>
    <property type="evidence" value="ECO:0007669"/>
    <property type="project" value="UniProtKB-ARBA"/>
</dbReference>
<dbReference type="GO" id="GO:0010045">
    <property type="term" value="P:response to nickel cation"/>
    <property type="evidence" value="ECO:0007669"/>
    <property type="project" value="InterPro"/>
</dbReference>
<dbReference type="CDD" id="cd22231">
    <property type="entry name" value="RHH_NikR_HicB-like"/>
    <property type="match status" value="1"/>
</dbReference>
<dbReference type="FunFam" id="1.10.1220.10:FF:000001">
    <property type="entry name" value="Nickel-responsive regulator"/>
    <property type="match status" value="1"/>
</dbReference>
<dbReference type="FunFam" id="3.30.70.1150:FF:000002">
    <property type="entry name" value="Nickel-responsive regulator"/>
    <property type="match status" value="1"/>
</dbReference>
<dbReference type="Gene3D" id="3.30.70.1150">
    <property type="entry name" value="ACT-like. Chain A, domain 2"/>
    <property type="match status" value="1"/>
</dbReference>
<dbReference type="Gene3D" id="1.10.1220.10">
    <property type="entry name" value="Met repressor-like"/>
    <property type="match status" value="1"/>
</dbReference>
<dbReference type="HAMAP" id="MF_00476">
    <property type="entry name" value="NikR"/>
    <property type="match status" value="1"/>
</dbReference>
<dbReference type="InterPro" id="IPR027271">
    <property type="entry name" value="Acetolactate_synth/TF_NikR_C"/>
</dbReference>
<dbReference type="InterPro" id="IPR045865">
    <property type="entry name" value="ACT-like_dom_sf"/>
</dbReference>
<dbReference type="InterPro" id="IPR013321">
    <property type="entry name" value="Arc_rbn_hlx_hlx"/>
</dbReference>
<dbReference type="InterPro" id="IPR002145">
    <property type="entry name" value="CopG"/>
</dbReference>
<dbReference type="InterPro" id="IPR050192">
    <property type="entry name" value="CopG/NikR_regulator"/>
</dbReference>
<dbReference type="InterPro" id="IPR022988">
    <property type="entry name" value="Ni_resp_reg_NikR"/>
</dbReference>
<dbReference type="InterPro" id="IPR014160">
    <property type="entry name" value="Nickel_NikR_proteobac"/>
</dbReference>
<dbReference type="InterPro" id="IPR010985">
    <property type="entry name" value="Ribbon_hlx_hlx"/>
</dbReference>
<dbReference type="InterPro" id="IPR014864">
    <property type="entry name" value="TF_NikR_Ni-bd_C"/>
</dbReference>
<dbReference type="NCBIfam" id="TIGR02793">
    <property type="entry name" value="nikR"/>
    <property type="match status" value="1"/>
</dbReference>
<dbReference type="NCBIfam" id="NF002815">
    <property type="entry name" value="PRK02967.1"/>
    <property type="match status" value="1"/>
</dbReference>
<dbReference type="NCBIfam" id="NF003381">
    <property type="entry name" value="PRK04460.1"/>
    <property type="match status" value="1"/>
</dbReference>
<dbReference type="PANTHER" id="PTHR34719">
    <property type="entry name" value="NICKEL-RESPONSIVE REGULATOR"/>
    <property type="match status" value="1"/>
</dbReference>
<dbReference type="PANTHER" id="PTHR34719:SF2">
    <property type="entry name" value="NICKEL-RESPONSIVE REGULATOR"/>
    <property type="match status" value="1"/>
</dbReference>
<dbReference type="Pfam" id="PF08753">
    <property type="entry name" value="NikR_C"/>
    <property type="match status" value="1"/>
</dbReference>
<dbReference type="Pfam" id="PF01402">
    <property type="entry name" value="RHH_1"/>
    <property type="match status" value="1"/>
</dbReference>
<dbReference type="SUPFAM" id="SSF55021">
    <property type="entry name" value="ACT-like"/>
    <property type="match status" value="1"/>
</dbReference>
<dbReference type="SUPFAM" id="SSF47598">
    <property type="entry name" value="Ribbon-helix-helix"/>
    <property type="match status" value="1"/>
</dbReference>